<evidence type="ECO:0000255" key="1">
    <source>
        <dbReference type="HAMAP-Rule" id="MF_00041"/>
    </source>
</evidence>
<protein>
    <recommendedName>
        <fullName evidence="1">Cysteine--tRNA ligase</fullName>
        <ecNumber evidence="1">6.1.1.16</ecNumber>
    </recommendedName>
    <alternativeName>
        <fullName evidence="1">Cysteinyl-tRNA synthetase</fullName>
        <shortName evidence="1">CysRS</shortName>
    </alternativeName>
</protein>
<feature type="chain" id="PRO_1000090856" description="Cysteine--tRNA ligase">
    <location>
        <begin position="1"/>
        <end position="470"/>
    </location>
</feature>
<feature type="short sequence motif" description="'HIGH' region">
    <location>
        <begin position="31"/>
        <end position="41"/>
    </location>
</feature>
<feature type="short sequence motif" description="'KMSKS' region">
    <location>
        <begin position="273"/>
        <end position="277"/>
    </location>
</feature>
<feature type="binding site" evidence="1">
    <location>
        <position position="29"/>
    </location>
    <ligand>
        <name>Zn(2+)</name>
        <dbReference type="ChEBI" id="CHEBI:29105"/>
    </ligand>
</feature>
<feature type="binding site" evidence="1">
    <location>
        <position position="211"/>
    </location>
    <ligand>
        <name>Zn(2+)</name>
        <dbReference type="ChEBI" id="CHEBI:29105"/>
    </ligand>
</feature>
<feature type="binding site" evidence="1">
    <location>
        <position position="236"/>
    </location>
    <ligand>
        <name>Zn(2+)</name>
        <dbReference type="ChEBI" id="CHEBI:29105"/>
    </ligand>
</feature>
<feature type="binding site" evidence="1">
    <location>
        <position position="240"/>
    </location>
    <ligand>
        <name>Zn(2+)</name>
        <dbReference type="ChEBI" id="CHEBI:29105"/>
    </ligand>
</feature>
<feature type="binding site" evidence="1">
    <location>
        <position position="276"/>
    </location>
    <ligand>
        <name>ATP</name>
        <dbReference type="ChEBI" id="CHEBI:30616"/>
    </ligand>
</feature>
<dbReference type="EC" id="6.1.1.16" evidence="1"/>
<dbReference type="EMBL" id="CP000747">
    <property type="protein sequence ID" value="ACG76832.1"/>
    <property type="molecule type" value="Genomic_DNA"/>
</dbReference>
<dbReference type="RefSeq" id="WP_012520980.1">
    <property type="nucleotide sequence ID" value="NC_011144.1"/>
</dbReference>
<dbReference type="SMR" id="B4RE90"/>
<dbReference type="STRING" id="450851.PHZ_c0418"/>
<dbReference type="KEGG" id="pzu:PHZ_c0418"/>
<dbReference type="eggNOG" id="COG0215">
    <property type="taxonomic scope" value="Bacteria"/>
</dbReference>
<dbReference type="HOGENOM" id="CLU_013528_0_1_5"/>
<dbReference type="OrthoDB" id="9815130at2"/>
<dbReference type="Proteomes" id="UP000001868">
    <property type="component" value="Chromosome"/>
</dbReference>
<dbReference type="GO" id="GO:0005829">
    <property type="term" value="C:cytosol"/>
    <property type="evidence" value="ECO:0007669"/>
    <property type="project" value="TreeGrafter"/>
</dbReference>
<dbReference type="GO" id="GO:0005524">
    <property type="term" value="F:ATP binding"/>
    <property type="evidence" value="ECO:0007669"/>
    <property type="project" value="UniProtKB-UniRule"/>
</dbReference>
<dbReference type="GO" id="GO:0004817">
    <property type="term" value="F:cysteine-tRNA ligase activity"/>
    <property type="evidence" value="ECO:0007669"/>
    <property type="project" value="UniProtKB-UniRule"/>
</dbReference>
<dbReference type="GO" id="GO:0008270">
    <property type="term" value="F:zinc ion binding"/>
    <property type="evidence" value="ECO:0007669"/>
    <property type="project" value="UniProtKB-UniRule"/>
</dbReference>
<dbReference type="GO" id="GO:0006423">
    <property type="term" value="P:cysteinyl-tRNA aminoacylation"/>
    <property type="evidence" value="ECO:0007669"/>
    <property type="project" value="UniProtKB-UniRule"/>
</dbReference>
<dbReference type="CDD" id="cd00672">
    <property type="entry name" value="CysRS_core"/>
    <property type="match status" value="1"/>
</dbReference>
<dbReference type="FunFam" id="3.40.50.620:FF:000068">
    <property type="entry name" value="Cysteine--tRNA ligase"/>
    <property type="match status" value="1"/>
</dbReference>
<dbReference type="Gene3D" id="1.20.120.1910">
    <property type="entry name" value="Cysteine-tRNA ligase, C-terminal anti-codon recognition domain"/>
    <property type="match status" value="1"/>
</dbReference>
<dbReference type="Gene3D" id="3.40.50.620">
    <property type="entry name" value="HUPs"/>
    <property type="match status" value="1"/>
</dbReference>
<dbReference type="HAMAP" id="MF_00041">
    <property type="entry name" value="Cys_tRNA_synth"/>
    <property type="match status" value="1"/>
</dbReference>
<dbReference type="InterPro" id="IPR015803">
    <property type="entry name" value="Cys-tRNA-ligase"/>
</dbReference>
<dbReference type="InterPro" id="IPR015273">
    <property type="entry name" value="Cys-tRNA-synt_Ia_DALR"/>
</dbReference>
<dbReference type="InterPro" id="IPR024909">
    <property type="entry name" value="Cys-tRNA/MSH_ligase"/>
</dbReference>
<dbReference type="InterPro" id="IPR056411">
    <property type="entry name" value="CysS_C"/>
</dbReference>
<dbReference type="InterPro" id="IPR014729">
    <property type="entry name" value="Rossmann-like_a/b/a_fold"/>
</dbReference>
<dbReference type="InterPro" id="IPR032678">
    <property type="entry name" value="tRNA-synt_1_cat_dom"/>
</dbReference>
<dbReference type="InterPro" id="IPR009080">
    <property type="entry name" value="tRNAsynth_Ia_anticodon-bd"/>
</dbReference>
<dbReference type="NCBIfam" id="TIGR00435">
    <property type="entry name" value="cysS"/>
    <property type="match status" value="1"/>
</dbReference>
<dbReference type="PANTHER" id="PTHR10890:SF3">
    <property type="entry name" value="CYSTEINE--TRNA LIGASE, CYTOPLASMIC"/>
    <property type="match status" value="1"/>
</dbReference>
<dbReference type="PANTHER" id="PTHR10890">
    <property type="entry name" value="CYSTEINYL-TRNA SYNTHETASE"/>
    <property type="match status" value="1"/>
</dbReference>
<dbReference type="Pfam" id="PF23493">
    <property type="entry name" value="CysS_C"/>
    <property type="match status" value="1"/>
</dbReference>
<dbReference type="Pfam" id="PF09190">
    <property type="entry name" value="DALR_2"/>
    <property type="match status" value="1"/>
</dbReference>
<dbReference type="Pfam" id="PF01406">
    <property type="entry name" value="tRNA-synt_1e"/>
    <property type="match status" value="1"/>
</dbReference>
<dbReference type="PRINTS" id="PR00983">
    <property type="entry name" value="TRNASYNTHCYS"/>
</dbReference>
<dbReference type="SMART" id="SM00840">
    <property type="entry name" value="DALR_2"/>
    <property type="match status" value="1"/>
</dbReference>
<dbReference type="SUPFAM" id="SSF47323">
    <property type="entry name" value="Anticodon-binding domain of a subclass of class I aminoacyl-tRNA synthetases"/>
    <property type="match status" value="1"/>
</dbReference>
<dbReference type="SUPFAM" id="SSF52374">
    <property type="entry name" value="Nucleotidylyl transferase"/>
    <property type="match status" value="1"/>
</dbReference>
<reference key="1">
    <citation type="journal article" date="2008" name="BMC Genomics">
        <title>Complete genome of Phenylobacterium zucineum - a novel facultative intracellular bacterium isolated from human erythroleukemia cell line K562.</title>
        <authorList>
            <person name="Luo Y."/>
            <person name="Xu X."/>
            <person name="Ding Z."/>
            <person name="Liu Z."/>
            <person name="Zhang B."/>
            <person name="Yan Z."/>
            <person name="Sun J."/>
            <person name="Hu S."/>
            <person name="Hu X."/>
        </authorList>
    </citation>
    <scope>NUCLEOTIDE SEQUENCE [LARGE SCALE GENOMIC DNA]</scope>
    <source>
        <strain>HLK1</strain>
    </source>
</reference>
<comment type="catalytic activity">
    <reaction evidence="1">
        <text>tRNA(Cys) + L-cysteine + ATP = L-cysteinyl-tRNA(Cys) + AMP + diphosphate</text>
        <dbReference type="Rhea" id="RHEA:17773"/>
        <dbReference type="Rhea" id="RHEA-COMP:9661"/>
        <dbReference type="Rhea" id="RHEA-COMP:9679"/>
        <dbReference type="ChEBI" id="CHEBI:30616"/>
        <dbReference type="ChEBI" id="CHEBI:33019"/>
        <dbReference type="ChEBI" id="CHEBI:35235"/>
        <dbReference type="ChEBI" id="CHEBI:78442"/>
        <dbReference type="ChEBI" id="CHEBI:78517"/>
        <dbReference type="ChEBI" id="CHEBI:456215"/>
        <dbReference type="EC" id="6.1.1.16"/>
    </reaction>
</comment>
<comment type="cofactor">
    <cofactor evidence="1">
        <name>Zn(2+)</name>
        <dbReference type="ChEBI" id="CHEBI:29105"/>
    </cofactor>
    <text evidence="1">Binds 1 zinc ion per subunit.</text>
</comment>
<comment type="subunit">
    <text evidence="1">Monomer.</text>
</comment>
<comment type="subcellular location">
    <subcellularLocation>
        <location evidence="1">Cytoplasm</location>
    </subcellularLocation>
</comment>
<comment type="similarity">
    <text evidence="1">Belongs to the class-I aminoacyl-tRNA synthetase family.</text>
</comment>
<organism>
    <name type="scientific">Phenylobacterium zucineum (strain HLK1)</name>
    <dbReference type="NCBI Taxonomy" id="450851"/>
    <lineage>
        <taxon>Bacteria</taxon>
        <taxon>Pseudomonadati</taxon>
        <taxon>Pseudomonadota</taxon>
        <taxon>Alphaproteobacteria</taxon>
        <taxon>Caulobacterales</taxon>
        <taxon>Caulobacteraceae</taxon>
        <taxon>Phenylobacterium</taxon>
    </lineage>
</organism>
<gene>
    <name evidence="1" type="primary">cysS</name>
    <name type="ordered locus">PHZ_c0418</name>
</gene>
<accession>B4RE90</accession>
<proteinExistence type="inferred from homology"/>
<name>SYC_PHEZH</name>
<sequence>MTLKLYDTMTRAKRDFVPSDPERVTMYVCGPTVYNYAHIGNFRPVVVFDLLFRVLRALYGEDHVLYAANVTDVDDKINRKAAEEGVPIGVVAERYLAAYNADARALGALAPTFQPKVTETMDAIVGMIGRLVDNGAAYAAEGHVLFSTEAFPDYGKLSGRPLEDLIAGARVDVAPYKKDPRDFVLWKPSKPGEPEWESPWGPGRPGWHIECSAMIEEALGLPIDIHGGGIDLVFPHHENELAQGVCAAHPHGHGQTYARYWLHNGFLNMAEEKMSKSVGNVALAHDLLKTWPGEALRWALLSGQYRQPLEWTDTLIEQAKSALDRLYRVLDDAARPGDAAAEPFVDPRVEAALHDDLNTPAAMAALFQISDELRSAIMRKDAAAVAEGRGRLVGSANLMGFLAQAPQAWFQSGADEDLKARVEDLLAQRQAARAAKDWPRADQIRAELAALNVEVMDGPSGATWRIKEQA</sequence>
<keyword id="KW-0030">Aminoacyl-tRNA synthetase</keyword>
<keyword id="KW-0067">ATP-binding</keyword>
<keyword id="KW-0963">Cytoplasm</keyword>
<keyword id="KW-0436">Ligase</keyword>
<keyword id="KW-0479">Metal-binding</keyword>
<keyword id="KW-0547">Nucleotide-binding</keyword>
<keyword id="KW-0648">Protein biosynthesis</keyword>
<keyword id="KW-1185">Reference proteome</keyword>
<keyword id="KW-0862">Zinc</keyword>